<dbReference type="EC" id="2.7.4.6"/>
<dbReference type="EMBL" id="AF043542">
    <property type="protein sequence ID" value="AAB99856.1"/>
    <property type="molecule type" value="mRNA"/>
</dbReference>
<dbReference type="RefSeq" id="NP_990378.1">
    <property type="nucleotide sequence ID" value="NM_205047.2"/>
</dbReference>
<dbReference type="SMR" id="O57535"/>
<dbReference type="BioGRID" id="676189">
    <property type="interactions" value="2"/>
</dbReference>
<dbReference type="FunCoup" id="O57535">
    <property type="interactions" value="1973"/>
</dbReference>
<dbReference type="IntAct" id="O57535">
    <property type="interactions" value="1"/>
</dbReference>
<dbReference type="STRING" id="9031.ENSGALP00000034078"/>
<dbReference type="PaxDb" id="9031-ENSGALP00000034078"/>
<dbReference type="Ensembl" id="ENSGALT00010070622.1">
    <property type="protein sequence ID" value="ENSGALP00010043313.1"/>
    <property type="gene ID" value="ENSGALG00010029223.1"/>
</dbReference>
<dbReference type="GeneID" id="395916"/>
<dbReference type="KEGG" id="gga:395916"/>
<dbReference type="CTD" id="4831"/>
<dbReference type="VEuPathDB" id="HostDB:geneid_395916"/>
<dbReference type="eggNOG" id="KOG0888">
    <property type="taxonomic scope" value="Eukaryota"/>
</dbReference>
<dbReference type="GeneTree" id="ENSGT00940000162213"/>
<dbReference type="HOGENOM" id="CLU_060216_6_3_1"/>
<dbReference type="InParanoid" id="O57535"/>
<dbReference type="OMA" id="NIWFKAD"/>
<dbReference type="OrthoDB" id="2162449at2759"/>
<dbReference type="PhylomeDB" id="O57535"/>
<dbReference type="TreeFam" id="TF106373"/>
<dbReference type="Reactome" id="R-GGA-499943">
    <property type="pathway name" value="Interconversion of nucleotide di- and triphosphates"/>
</dbReference>
<dbReference type="Reactome" id="R-GGA-6798695">
    <property type="pathway name" value="Neutrophil degranulation"/>
</dbReference>
<dbReference type="Reactome" id="R-GGA-9748787">
    <property type="pathway name" value="Azathioprine ADME"/>
</dbReference>
<dbReference type="Reactome" id="R-GGA-9755088">
    <property type="pathway name" value="Ribavirin ADME"/>
</dbReference>
<dbReference type="PRO" id="PR:O57535"/>
<dbReference type="Proteomes" id="UP000000539">
    <property type="component" value="Chromosome 18"/>
</dbReference>
<dbReference type="Bgee" id="ENSGALG00000002932">
    <property type="expression patterns" value="Expressed in granulocyte and 14 other cell types or tissues"/>
</dbReference>
<dbReference type="GO" id="GO:0005615">
    <property type="term" value="C:extracellular space"/>
    <property type="evidence" value="ECO:0000314"/>
    <property type="project" value="AgBase"/>
</dbReference>
<dbReference type="GO" id="GO:0030027">
    <property type="term" value="C:lamellipodium"/>
    <property type="evidence" value="ECO:0000250"/>
    <property type="project" value="AgBase"/>
</dbReference>
<dbReference type="GO" id="GO:0005739">
    <property type="term" value="C:mitochondrion"/>
    <property type="evidence" value="ECO:0000250"/>
    <property type="project" value="AgBase"/>
</dbReference>
<dbReference type="GO" id="GO:0005886">
    <property type="term" value="C:plasma membrane"/>
    <property type="evidence" value="ECO:0007669"/>
    <property type="project" value="UniProtKB-SubCell"/>
</dbReference>
<dbReference type="GO" id="GO:0001726">
    <property type="term" value="C:ruffle"/>
    <property type="evidence" value="ECO:0000250"/>
    <property type="project" value="AgBase"/>
</dbReference>
<dbReference type="GO" id="GO:0005524">
    <property type="term" value="F:ATP binding"/>
    <property type="evidence" value="ECO:0007669"/>
    <property type="project" value="UniProtKB-KW"/>
</dbReference>
<dbReference type="GO" id="GO:0046872">
    <property type="term" value="F:metal ion binding"/>
    <property type="evidence" value="ECO:0007669"/>
    <property type="project" value="UniProtKB-KW"/>
</dbReference>
<dbReference type="GO" id="GO:0004550">
    <property type="term" value="F:nucleoside diphosphate kinase activity"/>
    <property type="evidence" value="ECO:0007669"/>
    <property type="project" value="UniProtKB-EC"/>
</dbReference>
<dbReference type="GO" id="GO:0006241">
    <property type="term" value="P:CTP biosynthetic process"/>
    <property type="evidence" value="ECO:0007669"/>
    <property type="project" value="InterPro"/>
</dbReference>
<dbReference type="GO" id="GO:0006183">
    <property type="term" value="P:GTP biosynthetic process"/>
    <property type="evidence" value="ECO:0007669"/>
    <property type="project" value="InterPro"/>
</dbReference>
<dbReference type="GO" id="GO:0043066">
    <property type="term" value="P:negative regulation of apoptotic process"/>
    <property type="evidence" value="ECO:0000250"/>
    <property type="project" value="AgBase"/>
</dbReference>
<dbReference type="GO" id="GO:0050679">
    <property type="term" value="P:positive regulation of epithelial cell proliferation"/>
    <property type="evidence" value="ECO:0000250"/>
    <property type="project" value="AgBase"/>
</dbReference>
<dbReference type="GO" id="GO:0045618">
    <property type="term" value="P:positive regulation of keratinocyte differentiation"/>
    <property type="evidence" value="ECO:0000250"/>
    <property type="project" value="AgBase"/>
</dbReference>
<dbReference type="GO" id="GO:0042981">
    <property type="term" value="P:regulation of apoptotic process"/>
    <property type="evidence" value="ECO:0000318"/>
    <property type="project" value="GO_Central"/>
</dbReference>
<dbReference type="GO" id="GO:0045682">
    <property type="term" value="P:regulation of epidermis development"/>
    <property type="evidence" value="ECO:0000250"/>
    <property type="project" value="AgBase"/>
</dbReference>
<dbReference type="GO" id="GO:0006228">
    <property type="term" value="P:UTP biosynthetic process"/>
    <property type="evidence" value="ECO:0007669"/>
    <property type="project" value="InterPro"/>
</dbReference>
<dbReference type="CDD" id="cd04413">
    <property type="entry name" value="NDPk_I"/>
    <property type="match status" value="1"/>
</dbReference>
<dbReference type="FunFam" id="3.30.70.141:FF:000015">
    <property type="entry name" value="Nucleoside diphosphate kinase B"/>
    <property type="match status" value="1"/>
</dbReference>
<dbReference type="Gene3D" id="3.30.70.141">
    <property type="entry name" value="Nucleoside diphosphate kinase-like domain"/>
    <property type="match status" value="1"/>
</dbReference>
<dbReference type="HAMAP" id="MF_00451">
    <property type="entry name" value="NDP_kinase"/>
    <property type="match status" value="1"/>
</dbReference>
<dbReference type="InterPro" id="IPR034907">
    <property type="entry name" value="NDK-like_dom"/>
</dbReference>
<dbReference type="InterPro" id="IPR036850">
    <property type="entry name" value="NDK-like_dom_sf"/>
</dbReference>
<dbReference type="InterPro" id="IPR001564">
    <property type="entry name" value="Nucleoside_diP_kinase"/>
</dbReference>
<dbReference type="InterPro" id="IPR023005">
    <property type="entry name" value="Nucleoside_diP_kinase_AS"/>
</dbReference>
<dbReference type="NCBIfam" id="NF001908">
    <property type="entry name" value="PRK00668.1"/>
    <property type="match status" value="1"/>
</dbReference>
<dbReference type="PANTHER" id="PTHR11349">
    <property type="entry name" value="NUCLEOSIDE DIPHOSPHATE KINASE"/>
    <property type="match status" value="1"/>
</dbReference>
<dbReference type="Pfam" id="PF00334">
    <property type="entry name" value="NDK"/>
    <property type="match status" value="1"/>
</dbReference>
<dbReference type="PRINTS" id="PR01243">
    <property type="entry name" value="NUCDPKINASE"/>
</dbReference>
<dbReference type="SMART" id="SM00562">
    <property type="entry name" value="NDK"/>
    <property type="match status" value="1"/>
</dbReference>
<dbReference type="SUPFAM" id="SSF54919">
    <property type="entry name" value="Nucleoside diphosphate kinase, NDK"/>
    <property type="match status" value="1"/>
</dbReference>
<dbReference type="PROSITE" id="PS00469">
    <property type="entry name" value="NDPK"/>
    <property type="match status" value="1"/>
</dbReference>
<dbReference type="PROSITE" id="PS51374">
    <property type="entry name" value="NDPK_LIKE"/>
    <property type="match status" value="1"/>
</dbReference>
<feature type="chain" id="PRO_0000250203" description="Nucleoside diphosphate kinase">
    <location>
        <begin position="1"/>
        <end position="153"/>
    </location>
</feature>
<feature type="active site" description="Pros-phosphohistidine intermediate" evidence="1">
    <location>
        <position position="119"/>
    </location>
</feature>
<feature type="binding site" evidence="1">
    <location>
        <position position="13"/>
    </location>
    <ligand>
        <name>ATP</name>
        <dbReference type="ChEBI" id="CHEBI:30616"/>
    </ligand>
</feature>
<feature type="binding site" evidence="1">
    <location>
        <position position="61"/>
    </location>
    <ligand>
        <name>ATP</name>
        <dbReference type="ChEBI" id="CHEBI:30616"/>
    </ligand>
</feature>
<feature type="binding site" evidence="1">
    <location>
        <position position="89"/>
    </location>
    <ligand>
        <name>ATP</name>
        <dbReference type="ChEBI" id="CHEBI:30616"/>
    </ligand>
</feature>
<feature type="binding site" evidence="1">
    <location>
        <position position="95"/>
    </location>
    <ligand>
        <name>ATP</name>
        <dbReference type="ChEBI" id="CHEBI:30616"/>
    </ligand>
</feature>
<feature type="binding site" evidence="1">
    <location>
        <position position="106"/>
    </location>
    <ligand>
        <name>ATP</name>
        <dbReference type="ChEBI" id="CHEBI:30616"/>
    </ligand>
</feature>
<feature type="binding site" evidence="1">
    <location>
        <position position="116"/>
    </location>
    <ligand>
        <name>ATP</name>
        <dbReference type="ChEBI" id="CHEBI:30616"/>
    </ligand>
</feature>
<proteinExistence type="evidence at transcript level"/>
<sequence>MAANCERTFIAIKPDGVQRGLVGEIIKRFEQKGFRLVAMKFVHASEDLLKQHYIDLKDRPFYPGLVKYMNSGPVVAMVWEGLNVVKTGRVMLGETNPADSKPGTIRGDFCIQVGRNIIHGSDSVESAQKEISLWFKPAELIDYRSCAHDWVYE</sequence>
<accession>O57535</accession>
<protein>
    <recommendedName>
        <fullName>Nucleoside diphosphate kinase</fullName>
        <shortName>NDK</shortName>
        <shortName>NDP kinase</shortName>
        <ecNumber>2.7.4.6</ecNumber>
    </recommendedName>
</protein>
<organism>
    <name type="scientific">Gallus gallus</name>
    <name type="common">Chicken</name>
    <dbReference type="NCBI Taxonomy" id="9031"/>
    <lineage>
        <taxon>Eukaryota</taxon>
        <taxon>Metazoa</taxon>
        <taxon>Chordata</taxon>
        <taxon>Craniata</taxon>
        <taxon>Vertebrata</taxon>
        <taxon>Euteleostomi</taxon>
        <taxon>Archelosauria</taxon>
        <taxon>Archosauria</taxon>
        <taxon>Dinosauria</taxon>
        <taxon>Saurischia</taxon>
        <taxon>Theropoda</taxon>
        <taxon>Coelurosauria</taxon>
        <taxon>Aves</taxon>
        <taxon>Neognathae</taxon>
        <taxon>Galloanserae</taxon>
        <taxon>Galliformes</taxon>
        <taxon>Phasianidae</taxon>
        <taxon>Phasianinae</taxon>
        <taxon>Gallus</taxon>
    </lineage>
</organism>
<reference key="1">
    <citation type="submission" date="1998-01" db="EMBL/GenBank/DDBJ databases">
        <authorList>
            <person name="Mehus J.G."/>
            <person name="Lambeth D.O."/>
        </authorList>
    </citation>
    <scope>NUCLEOTIDE SEQUENCE [MRNA]</scope>
    <source>
        <tissue>Liver</tissue>
    </source>
</reference>
<comment type="function">
    <text evidence="1">Major role in the synthesis of nucleoside triphosphates other than ATP. The ATP gamma phosphate is transferred to the NDP beta phosphate via a ping-pong mechanism, using a phosphorylated active-site intermediate (By similarity).</text>
</comment>
<comment type="catalytic activity">
    <reaction>
        <text>a 2'-deoxyribonucleoside 5'-diphosphate + ATP = a 2'-deoxyribonucleoside 5'-triphosphate + ADP</text>
        <dbReference type="Rhea" id="RHEA:44640"/>
        <dbReference type="ChEBI" id="CHEBI:30616"/>
        <dbReference type="ChEBI" id="CHEBI:61560"/>
        <dbReference type="ChEBI" id="CHEBI:73316"/>
        <dbReference type="ChEBI" id="CHEBI:456216"/>
        <dbReference type="EC" id="2.7.4.6"/>
    </reaction>
</comment>
<comment type="catalytic activity">
    <reaction>
        <text>a ribonucleoside 5'-diphosphate + ATP = a ribonucleoside 5'-triphosphate + ADP</text>
        <dbReference type="Rhea" id="RHEA:18113"/>
        <dbReference type="ChEBI" id="CHEBI:30616"/>
        <dbReference type="ChEBI" id="CHEBI:57930"/>
        <dbReference type="ChEBI" id="CHEBI:61557"/>
        <dbReference type="ChEBI" id="CHEBI:456216"/>
        <dbReference type="EC" id="2.7.4.6"/>
    </reaction>
</comment>
<comment type="cofactor">
    <cofactor evidence="1">
        <name>Mg(2+)</name>
        <dbReference type="ChEBI" id="CHEBI:18420"/>
    </cofactor>
</comment>
<comment type="subcellular location">
    <subcellularLocation>
        <location>Cytoplasm</location>
    </subcellularLocation>
    <subcellularLocation>
        <location evidence="1">Cell membrane</location>
    </subcellularLocation>
</comment>
<comment type="similarity">
    <text evidence="2">Belongs to the NDK family.</text>
</comment>
<keyword id="KW-0067">ATP-binding</keyword>
<keyword id="KW-1003">Cell membrane</keyword>
<keyword id="KW-0963">Cytoplasm</keyword>
<keyword id="KW-0418">Kinase</keyword>
<keyword id="KW-0460">Magnesium</keyword>
<keyword id="KW-0472">Membrane</keyword>
<keyword id="KW-0479">Metal-binding</keyword>
<keyword id="KW-0546">Nucleotide metabolism</keyword>
<keyword id="KW-0547">Nucleotide-binding</keyword>
<keyword id="KW-0597">Phosphoprotein</keyword>
<keyword id="KW-1185">Reference proteome</keyword>
<keyword id="KW-0808">Transferase</keyword>
<evidence type="ECO:0000250" key="1"/>
<evidence type="ECO:0000305" key="2"/>
<name>NDK_CHICK</name>